<feature type="chain" id="PRO_1000117388" description="UDP-N-acetylmuramate--L-alanine ligase">
    <location>
        <begin position="1"/>
        <end position="455"/>
    </location>
</feature>
<feature type="binding site" evidence="1">
    <location>
        <begin position="109"/>
        <end position="115"/>
    </location>
    <ligand>
        <name>ATP</name>
        <dbReference type="ChEBI" id="CHEBI:30616"/>
    </ligand>
</feature>
<proteinExistence type="inferred from homology"/>
<organism>
    <name type="scientific">Caldicellulosiruptor bescii (strain ATCC BAA-1888 / DSM 6725 / KCTC 15123 / Z-1320)</name>
    <name type="common">Anaerocellum thermophilum</name>
    <dbReference type="NCBI Taxonomy" id="521460"/>
    <lineage>
        <taxon>Bacteria</taxon>
        <taxon>Bacillati</taxon>
        <taxon>Bacillota</taxon>
        <taxon>Bacillota incertae sedis</taxon>
        <taxon>Caldicellulosiruptorales</taxon>
        <taxon>Caldicellulosiruptoraceae</taxon>
        <taxon>Caldicellulosiruptor</taxon>
    </lineage>
</organism>
<evidence type="ECO:0000255" key="1">
    <source>
        <dbReference type="HAMAP-Rule" id="MF_00046"/>
    </source>
</evidence>
<reference key="1">
    <citation type="submission" date="2009-01" db="EMBL/GenBank/DDBJ databases">
        <title>Complete sequence of chromosome of Caldicellulosiruptor becscii DSM 6725.</title>
        <authorList>
            <person name="Lucas S."/>
            <person name="Copeland A."/>
            <person name="Lapidus A."/>
            <person name="Glavina del Rio T."/>
            <person name="Tice H."/>
            <person name="Bruce D."/>
            <person name="Goodwin L."/>
            <person name="Pitluck S."/>
            <person name="Sims D."/>
            <person name="Meincke L."/>
            <person name="Brettin T."/>
            <person name="Detter J.C."/>
            <person name="Han C."/>
            <person name="Larimer F."/>
            <person name="Land M."/>
            <person name="Hauser L."/>
            <person name="Kyrpides N."/>
            <person name="Ovchinnikova G."/>
            <person name="Kataeva I."/>
            <person name="Adams M.W.W."/>
        </authorList>
    </citation>
    <scope>NUCLEOTIDE SEQUENCE [LARGE SCALE GENOMIC DNA]</scope>
    <source>
        <strain>ATCC BAA-1888 / DSM 6725 / KCTC 15123 / Z-1320</strain>
    </source>
</reference>
<comment type="function">
    <text evidence="1">Cell wall formation.</text>
</comment>
<comment type="catalytic activity">
    <reaction evidence="1">
        <text>UDP-N-acetyl-alpha-D-muramate + L-alanine + ATP = UDP-N-acetyl-alpha-D-muramoyl-L-alanine + ADP + phosphate + H(+)</text>
        <dbReference type="Rhea" id="RHEA:23372"/>
        <dbReference type="ChEBI" id="CHEBI:15378"/>
        <dbReference type="ChEBI" id="CHEBI:30616"/>
        <dbReference type="ChEBI" id="CHEBI:43474"/>
        <dbReference type="ChEBI" id="CHEBI:57972"/>
        <dbReference type="ChEBI" id="CHEBI:70757"/>
        <dbReference type="ChEBI" id="CHEBI:83898"/>
        <dbReference type="ChEBI" id="CHEBI:456216"/>
        <dbReference type="EC" id="6.3.2.8"/>
    </reaction>
</comment>
<comment type="pathway">
    <text evidence="1">Cell wall biogenesis; peptidoglycan biosynthesis.</text>
</comment>
<comment type="subcellular location">
    <subcellularLocation>
        <location evidence="1">Cytoplasm</location>
    </subcellularLocation>
</comment>
<comment type="similarity">
    <text evidence="1">Belongs to the MurCDEF family.</text>
</comment>
<keyword id="KW-0067">ATP-binding</keyword>
<keyword id="KW-0131">Cell cycle</keyword>
<keyword id="KW-0132">Cell division</keyword>
<keyword id="KW-0133">Cell shape</keyword>
<keyword id="KW-0961">Cell wall biogenesis/degradation</keyword>
<keyword id="KW-0963">Cytoplasm</keyword>
<keyword id="KW-0436">Ligase</keyword>
<keyword id="KW-0547">Nucleotide-binding</keyword>
<keyword id="KW-0573">Peptidoglycan synthesis</keyword>
<sequence length="455" mass="50745">MNKYFFIGIGGISMSAIALILKNQGFWVEGSDMQESATTKMLRENGINVYIGHDESHIHGDETVIYTAAISKDNPELLAAKRMNLKIYERAEFLGLLMKDFKNVITISGTHGKTTTTSMIGYILKKANYNPTVLVGAFVKQLGGNFVIGSKEYLVVEACEYVDSFLKFNPTIGVILNIDNDHLDYFKDIDSIKNSFKKFAQKIPTSGFLVVNYDDKNVKDIINQLNTQIICISTKEKTDIFADNISCSDGYYEFDVKNNNDEILAHIKLNIPGFHNVYNALAAFAVASKLGVESITIEQALSEFRGASRRLEKVGEFNGIYLYDDYAHHPTEIKATLATLKKISEGKVLAIFQPHTFSRLKTLLNEFAESLQLADKVIVTDVYAAREKNVFGITSEKLYLKLKEIGIDCEYISNFEDIACYAVKEAKKGDIIATIGAGDINKCLDIILKKAVVKS</sequence>
<dbReference type="EC" id="6.3.2.8" evidence="1"/>
<dbReference type="EMBL" id="CP001393">
    <property type="protein sequence ID" value="ACM61469.1"/>
    <property type="molecule type" value="Genomic_DNA"/>
</dbReference>
<dbReference type="RefSeq" id="WP_015908719.1">
    <property type="nucleotide sequence ID" value="NC_012034.1"/>
</dbReference>
<dbReference type="SMR" id="B9MND8"/>
<dbReference type="STRING" id="521460.Athe_2401"/>
<dbReference type="GeneID" id="31773752"/>
<dbReference type="KEGG" id="ate:Athe_2401"/>
<dbReference type="eggNOG" id="COG0773">
    <property type="taxonomic scope" value="Bacteria"/>
</dbReference>
<dbReference type="HOGENOM" id="CLU_028104_1_0_9"/>
<dbReference type="UniPathway" id="UPA00219"/>
<dbReference type="Proteomes" id="UP000007723">
    <property type="component" value="Chromosome"/>
</dbReference>
<dbReference type="GO" id="GO:0005737">
    <property type="term" value="C:cytoplasm"/>
    <property type="evidence" value="ECO:0007669"/>
    <property type="project" value="UniProtKB-SubCell"/>
</dbReference>
<dbReference type="GO" id="GO:0005524">
    <property type="term" value="F:ATP binding"/>
    <property type="evidence" value="ECO:0007669"/>
    <property type="project" value="UniProtKB-UniRule"/>
</dbReference>
<dbReference type="GO" id="GO:0008763">
    <property type="term" value="F:UDP-N-acetylmuramate-L-alanine ligase activity"/>
    <property type="evidence" value="ECO:0007669"/>
    <property type="project" value="UniProtKB-UniRule"/>
</dbReference>
<dbReference type="GO" id="GO:0051301">
    <property type="term" value="P:cell division"/>
    <property type="evidence" value="ECO:0007669"/>
    <property type="project" value="UniProtKB-KW"/>
</dbReference>
<dbReference type="GO" id="GO:0071555">
    <property type="term" value="P:cell wall organization"/>
    <property type="evidence" value="ECO:0007669"/>
    <property type="project" value="UniProtKB-KW"/>
</dbReference>
<dbReference type="GO" id="GO:0009252">
    <property type="term" value="P:peptidoglycan biosynthetic process"/>
    <property type="evidence" value="ECO:0007669"/>
    <property type="project" value="UniProtKB-UniRule"/>
</dbReference>
<dbReference type="GO" id="GO:0008360">
    <property type="term" value="P:regulation of cell shape"/>
    <property type="evidence" value="ECO:0007669"/>
    <property type="project" value="UniProtKB-KW"/>
</dbReference>
<dbReference type="Gene3D" id="3.90.190.20">
    <property type="entry name" value="Mur ligase, C-terminal domain"/>
    <property type="match status" value="1"/>
</dbReference>
<dbReference type="Gene3D" id="3.40.1190.10">
    <property type="entry name" value="Mur-like, catalytic domain"/>
    <property type="match status" value="1"/>
</dbReference>
<dbReference type="Gene3D" id="3.40.50.720">
    <property type="entry name" value="NAD(P)-binding Rossmann-like Domain"/>
    <property type="match status" value="1"/>
</dbReference>
<dbReference type="HAMAP" id="MF_00046">
    <property type="entry name" value="MurC"/>
    <property type="match status" value="1"/>
</dbReference>
<dbReference type="InterPro" id="IPR036565">
    <property type="entry name" value="Mur-like_cat_sf"/>
</dbReference>
<dbReference type="InterPro" id="IPR004101">
    <property type="entry name" value="Mur_ligase_C"/>
</dbReference>
<dbReference type="InterPro" id="IPR036615">
    <property type="entry name" value="Mur_ligase_C_dom_sf"/>
</dbReference>
<dbReference type="InterPro" id="IPR013221">
    <property type="entry name" value="Mur_ligase_cen"/>
</dbReference>
<dbReference type="InterPro" id="IPR000713">
    <property type="entry name" value="Mur_ligase_N"/>
</dbReference>
<dbReference type="InterPro" id="IPR050061">
    <property type="entry name" value="MurCDEF_pg_biosynth"/>
</dbReference>
<dbReference type="InterPro" id="IPR005758">
    <property type="entry name" value="UDP-N-AcMur_Ala_ligase_MurC"/>
</dbReference>
<dbReference type="NCBIfam" id="TIGR01082">
    <property type="entry name" value="murC"/>
    <property type="match status" value="1"/>
</dbReference>
<dbReference type="PANTHER" id="PTHR43445:SF3">
    <property type="entry name" value="UDP-N-ACETYLMURAMATE--L-ALANINE LIGASE"/>
    <property type="match status" value="1"/>
</dbReference>
<dbReference type="PANTHER" id="PTHR43445">
    <property type="entry name" value="UDP-N-ACETYLMURAMATE--L-ALANINE LIGASE-RELATED"/>
    <property type="match status" value="1"/>
</dbReference>
<dbReference type="Pfam" id="PF01225">
    <property type="entry name" value="Mur_ligase"/>
    <property type="match status" value="1"/>
</dbReference>
<dbReference type="Pfam" id="PF02875">
    <property type="entry name" value="Mur_ligase_C"/>
    <property type="match status" value="1"/>
</dbReference>
<dbReference type="Pfam" id="PF08245">
    <property type="entry name" value="Mur_ligase_M"/>
    <property type="match status" value="1"/>
</dbReference>
<dbReference type="SUPFAM" id="SSF51984">
    <property type="entry name" value="MurCD N-terminal domain"/>
    <property type="match status" value="1"/>
</dbReference>
<dbReference type="SUPFAM" id="SSF53623">
    <property type="entry name" value="MurD-like peptide ligases, catalytic domain"/>
    <property type="match status" value="1"/>
</dbReference>
<dbReference type="SUPFAM" id="SSF53244">
    <property type="entry name" value="MurD-like peptide ligases, peptide-binding domain"/>
    <property type="match status" value="1"/>
</dbReference>
<protein>
    <recommendedName>
        <fullName evidence="1">UDP-N-acetylmuramate--L-alanine ligase</fullName>
        <ecNumber evidence="1">6.3.2.8</ecNumber>
    </recommendedName>
    <alternativeName>
        <fullName evidence="1">UDP-N-acetylmuramoyl-L-alanine synthetase</fullName>
    </alternativeName>
</protein>
<name>MURC_CALBD</name>
<accession>B9MND8</accession>
<gene>
    <name evidence="1" type="primary">murC</name>
    <name type="ordered locus">Athe_2401</name>
</gene>